<protein>
    <recommendedName>
        <fullName evidence="2">Translation initiation factor IF-2</fullName>
    </recommendedName>
</protein>
<comment type="function">
    <text evidence="2">One of the essential components for the initiation of protein synthesis. Protects formylmethionyl-tRNA from spontaneous hydrolysis and promotes its binding to the 30S ribosomal subunits. Also involved in the hydrolysis of GTP during the formation of the 70S ribosomal complex.</text>
</comment>
<comment type="subcellular location">
    <subcellularLocation>
        <location evidence="2">Cytoplasm</location>
    </subcellularLocation>
</comment>
<comment type="similarity">
    <text evidence="2">Belongs to the TRAFAC class translation factor GTPase superfamily. Classic translation factor GTPase family. IF-2 subfamily.</text>
</comment>
<dbReference type="EMBL" id="CP000308">
    <property type="protein sequence ID" value="ABG12015.1"/>
    <property type="molecule type" value="Genomic_DNA"/>
</dbReference>
<dbReference type="RefSeq" id="WP_002220556.1">
    <property type="nucleotide sequence ID" value="NC_008150.1"/>
</dbReference>
<dbReference type="SMR" id="Q1CC07"/>
<dbReference type="KEGG" id="ypa:YPA_0046"/>
<dbReference type="Proteomes" id="UP000001971">
    <property type="component" value="Chromosome"/>
</dbReference>
<dbReference type="GO" id="GO:0005829">
    <property type="term" value="C:cytosol"/>
    <property type="evidence" value="ECO:0007669"/>
    <property type="project" value="TreeGrafter"/>
</dbReference>
<dbReference type="GO" id="GO:0005525">
    <property type="term" value="F:GTP binding"/>
    <property type="evidence" value="ECO:0007669"/>
    <property type="project" value="UniProtKB-KW"/>
</dbReference>
<dbReference type="GO" id="GO:0003924">
    <property type="term" value="F:GTPase activity"/>
    <property type="evidence" value="ECO:0007669"/>
    <property type="project" value="UniProtKB-UniRule"/>
</dbReference>
<dbReference type="GO" id="GO:0097216">
    <property type="term" value="F:guanosine tetraphosphate binding"/>
    <property type="evidence" value="ECO:0007669"/>
    <property type="project" value="UniProtKB-ARBA"/>
</dbReference>
<dbReference type="GO" id="GO:0003743">
    <property type="term" value="F:translation initiation factor activity"/>
    <property type="evidence" value="ECO:0007669"/>
    <property type="project" value="UniProtKB-UniRule"/>
</dbReference>
<dbReference type="CDD" id="cd01887">
    <property type="entry name" value="IF2_eIF5B"/>
    <property type="match status" value="1"/>
</dbReference>
<dbReference type="CDD" id="cd03702">
    <property type="entry name" value="IF2_mtIF2_II"/>
    <property type="match status" value="1"/>
</dbReference>
<dbReference type="CDD" id="cd03692">
    <property type="entry name" value="mtIF2_IVc"/>
    <property type="match status" value="1"/>
</dbReference>
<dbReference type="FunFam" id="2.40.30.10:FF:000007">
    <property type="entry name" value="Translation initiation factor IF-2"/>
    <property type="match status" value="1"/>
</dbReference>
<dbReference type="FunFam" id="2.40.30.10:FF:000008">
    <property type="entry name" value="Translation initiation factor IF-2"/>
    <property type="match status" value="1"/>
</dbReference>
<dbReference type="FunFam" id="3.30.56.50:FF:000001">
    <property type="entry name" value="Translation initiation factor IF-2"/>
    <property type="match status" value="1"/>
</dbReference>
<dbReference type="FunFam" id="3.40.50.10050:FF:000001">
    <property type="entry name" value="Translation initiation factor IF-2"/>
    <property type="match status" value="1"/>
</dbReference>
<dbReference type="FunFam" id="3.40.50.300:FF:000019">
    <property type="entry name" value="Translation initiation factor IF-2"/>
    <property type="match status" value="1"/>
</dbReference>
<dbReference type="Gene3D" id="3.40.50.300">
    <property type="entry name" value="P-loop containing nucleotide triphosphate hydrolases"/>
    <property type="match status" value="1"/>
</dbReference>
<dbReference type="Gene3D" id="3.30.56.50">
    <property type="entry name" value="Putative DNA-binding domain, N-terminal subdomain of bacterial translation initiation factor IF2"/>
    <property type="match status" value="1"/>
</dbReference>
<dbReference type="Gene3D" id="2.40.30.10">
    <property type="entry name" value="Translation factors"/>
    <property type="match status" value="2"/>
</dbReference>
<dbReference type="Gene3D" id="3.40.50.10050">
    <property type="entry name" value="Translation initiation factor IF- 2, domain 3"/>
    <property type="match status" value="1"/>
</dbReference>
<dbReference type="HAMAP" id="MF_00100_B">
    <property type="entry name" value="IF_2_B"/>
    <property type="match status" value="1"/>
</dbReference>
<dbReference type="InterPro" id="IPR009061">
    <property type="entry name" value="DNA-bd_dom_put_sf"/>
</dbReference>
<dbReference type="InterPro" id="IPR053905">
    <property type="entry name" value="EF-G-like_DII"/>
</dbReference>
<dbReference type="InterPro" id="IPR004161">
    <property type="entry name" value="EFTu-like_2"/>
</dbReference>
<dbReference type="InterPro" id="IPR013575">
    <property type="entry name" value="IF2_assoc_dom_bac"/>
</dbReference>
<dbReference type="InterPro" id="IPR044145">
    <property type="entry name" value="IF2_II"/>
</dbReference>
<dbReference type="InterPro" id="IPR006847">
    <property type="entry name" value="IF2_N"/>
</dbReference>
<dbReference type="InterPro" id="IPR027417">
    <property type="entry name" value="P-loop_NTPase"/>
</dbReference>
<dbReference type="InterPro" id="IPR005225">
    <property type="entry name" value="Small_GTP-bd"/>
</dbReference>
<dbReference type="InterPro" id="IPR000795">
    <property type="entry name" value="T_Tr_GTP-bd_dom"/>
</dbReference>
<dbReference type="InterPro" id="IPR000178">
    <property type="entry name" value="TF_IF2_bacterial-like"/>
</dbReference>
<dbReference type="InterPro" id="IPR015760">
    <property type="entry name" value="TIF_IF2"/>
</dbReference>
<dbReference type="InterPro" id="IPR023115">
    <property type="entry name" value="TIF_IF2_dom3"/>
</dbReference>
<dbReference type="InterPro" id="IPR036925">
    <property type="entry name" value="TIF_IF2_dom3_sf"/>
</dbReference>
<dbReference type="InterPro" id="IPR009000">
    <property type="entry name" value="Transl_B-barrel_sf"/>
</dbReference>
<dbReference type="NCBIfam" id="TIGR00487">
    <property type="entry name" value="IF-2"/>
    <property type="match status" value="1"/>
</dbReference>
<dbReference type="NCBIfam" id="TIGR00231">
    <property type="entry name" value="small_GTP"/>
    <property type="match status" value="1"/>
</dbReference>
<dbReference type="PANTHER" id="PTHR43381:SF5">
    <property type="entry name" value="TR-TYPE G DOMAIN-CONTAINING PROTEIN"/>
    <property type="match status" value="1"/>
</dbReference>
<dbReference type="PANTHER" id="PTHR43381">
    <property type="entry name" value="TRANSLATION INITIATION FACTOR IF-2-RELATED"/>
    <property type="match status" value="1"/>
</dbReference>
<dbReference type="Pfam" id="PF22042">
    <property type="entry name" value="EF-G_D2"/>
    <property type="match status" value="1"/>
</dbReference>
<dbReference type="Pfam" id="PF00009">
    <property type="entry name" value="GTP_EFTU"/>
    <property type="match status" value="1"/>
</dbReference>
<dbReference type="Pfam" id="PF03144">
    <property type="entry name" value="GTP_EFTU_D2"/>
    <property type="match status" value="1"/>
</dbReference>
<dbReference type="Pfam" id="PF11987">
    <property type="entry name" value="IF-2"/>
    <property type="match status" value="1"/>
</dbReference>
<dbReference type="Pfam" id="PF08364">
    <property type="entry name" value="IF2_assoc"/>
    <property type="match status" value="1"/>
</dbReference>
<dbReference type="Pfam" id="PF04760">
    <property type="entry name" value="IF2_N"/>
    <property type="match status" value="2"/>
</dbReference>
<dbReference type="SUPFAM" id="SSF52156">
    <property type="entry name" value="Initiation factor IF2/eIF5b, domain 3"/>
    <property type="match status" value="1"/>
</dbReference>
<dbReference type="SUPFAM" id="SSF52540">
    <property type="entry name" value="P-loop containing nucleoside triphosphate hydrolases"/>
    <property type="match status" value="1"/>
</dbReference>
<dbReference type="SUPFAM" id="SSF46955">
    <property type="entry name" value="Putative DNA-binding domain"/>
    <property type="match status" value="1"/>
</dbReference>
<dbReference type="SUPFAM" id="SSF50447">
    <property type="entry name" value="Translation proteins"/>
    <property type="match status" value="2"/>
</dbReference>
<dbReference type="PROSITE" id="PS51722">
    <property type="entry name" value="G_TR_2"/>
    <property type="match status" value="1"/>
</dbReference>
<dbReference type="PROSITE" id="PS01176">
    <property type="entry name" value="IF2"/>
    <property type="match status" value="1"/>
</dbReference>
<feature type="chain" id="PRO_1000008373" description="Translation initiation factor IF-2">
    <location>
        <begin position="1"/>
        <end position="884"/>
    </location>
</feature>
<feature type="domain" description="tr-type G">
    <location>
        <begin position="383"/>
        <end position="552"/>
    </location>
</feature>
<feature type="region of interest" description="Disordered" evidence="3">
    <location>
        <begin position="93"/>
        <end position="288"/>
    </location>
</feature>
<feature type="region of interest" description="G1" evidence="1">
    <location>
        <begin position="392"/>
        <end position="399"/>
    </location>
</feature>
<feature type="region of interest" description="G2" evidence="1">
    <location>
        <begin position="417"/>
        <end position="421"/>
    </location>
</feature>
<feature type="region of interest" description="G3" evidence="1">
    <location>
        <begin position="438"/>
        <end position="441"/>
    </location>
</feature>
<feature type="region of interest" description="G4" evidence="1">
    <location>
        <begin position="492"/>
        <end position="495"/>
    </location>
</feature>
<feature type="region of interest" description="G5" evidence="1">
    <location>
        <begin position="528"/>
        <end position="530"/>
    </location>
</feature>
<feature type="compositionally biased region" description="Basic and acidic residues" evidence="3">
    <location>
        <begin position="99"/>
        <end position="209"/>
    </location>
</feature>
<feature type="compositionally biased region" description="Polar residues" evidence="3">
    <location>
        <begin position="216"/>
        <end position="229"/>
    </location>
</feature>
<feature type="compositionally biased region" description="Basic and acidic residues" evidence="3">
    <location>
        <begin position="231"/>
        <end position="246"/>
    </location>
</feature>
<feature type="compositionally biased region" description="Basic residues" evidence="3">
    <location>
        <begin position="247"/>
        <end position="261"/>
    </location>
</feature>
<feature type="compositionally biased region" description="Basic and acidic residues" evidence="3">
    <location>
        <begin position="262"/>
        <end position="275"/>
    </location>
</feature>
<feature type="binding site" evidence="2">
    <location>
        <begin position="392"/>
        <end position="399"/>
    </location>
    <ligand>
        <name>GTP</name>
        <dbReference type="ChEBI" id="CHEBI:37565"/>
    </ligand>
</feature>
<feature type="binding site" evidence="2">
    <location>
        <begin position="438"/>
        <end position="442"/>
    </location>
    <ligand>
        <name>GTP</name>
        <dbReference type="ChEBI" id="CHEBI:37565"/>
    </ligand>
</feature>
<feature type="binding site" evidence="2">
    <location>
        <begin position="492"/>
        <end position="495"/>
    </location>
    <ligand>
        <name>GTP</name>
        <dbReference type="ChEBI" id="CHEBI:37565"/>
    </ligand>
</feature>
<reference key="1">
    <citation type="journal article" date="2006" name="J. Bacteriol.">
        <title>Complete genome sequence of Yersinia pestis strains Antiqua and Nepal516: evidence of gene reduction in an emerging pathogen.</title>
        <authorList>
            <person name="Chain P.S.G."/>
            <person name="Hu P."/>
            <person name="Malfatti S.A."/>
            <person name="Radnedge L."/>
            <person name="Larimer F."/>
            <person name="Vergez L.M."/>
            <person name="Worsham P."/>
            <person name="Chu M.C."/>
            <person name="Andersen G.L."/>
        </authorList>
    </citation>
    <scope>NUCLEOTIDE SEQUENCE [LARGE SCALE GENOMIC DNA]</scope>
    <source>
        <strain>Antiqua</strain>
    </source>
</reference>
<gene>
    <name evidence="2" type="primary">infB</name>
    <name type="ordered locus">YPA_0046</name>
</gene>
<proteinExistence type="inferred from homology"/>
<sequence>MTDVTVKSLAAEIQTPVDRLVQQFADAGIKKSDVDSVTQQEKEILLAHLNREHGSVPNKLTLQRKTRSTLNIPSTGGKSKSVQIEVRKKRTYVNTPEAEQAKAEEQAQREAEATAQKIAEEKAKREAEEQAKREAAEKAKRQAAEKEKVTNQQTDEKTKPAQTDKARREAEAAELKRSVEEETRRKVEEDAKRVAEEARKMAAENEGKWPEPVAEQTESADYHVTTSQHARAAEDENDAKVEGDRRSRTRGGKATKQKKGNKLSESKADREEARAVGRKGKRKPSTLQQSFNKPVVAVNRDVVIGETVTVAELANKMAVKGSQVIKAMMKLGAMATINQVIDQETAQLVAEEMGHKVILRRENELEEALMSDRDIGVEAAAEHRAPVVTIMGHVDHGKTSLLDYIRSTKVASGEAGGITQHIGAYHVETENGMITFLDTPGHAAFTSMRARGAQATDIVVLVVAADDGVMPQTIEAIQHAKAANVPVVVAVNKIDKPEADPDRVKTELSQYGIQPEEWGGESQFINVSAKAGIGIDELLNAILLQAEVLELKAVRTGMANGVVIESFLDKGRGPVATVLVQQGTLNKGDIVLCGFEYGRVRAMRDELGRDITSVGPSIPVEILGLSSVPAAGDEVTVVRDEKKAREVALYRQGKFREVKLARQQKSKLENMFANMTEGEVSELNIVIKSDVQGSCEAICDSLEKLSTDEVKVRIVGSGVGGITETDATLAAASGAIILGFNVRADASARRVVETEGLDLRYYSVIYSLIDEVKQAMSGMLAPEYKQQIIGLAEVRDVFKSPKFGAIAGCMVTEGVIKRNNPIRVLRDNVVIYEGELESLRRFKDDVSEVRNGMECGIGVKNYNDVRTGDVIEVFEIIEIKRTIA</sequence>
<organism>
    <name type="scientific">Yersinia pestis bv. Antiqua (strain Antiqua)</name>
    <dbReference type="NCBI Taxonomy" id="360102"/>
    <lineage>
        <taxon>Bacteria</taxon>
        <taxon>Pseudomonadati</taxon>
        <taxon>Pseudomonadota</taxon>
        <taxon>Gammaproteobacteria</taxon>
        <taxon>Enterobacterales</taxon>
        <taxon>Yersiniaceae</taxon>
        <taxon>Yersinia</taxon>
    </lineage>
</organism>
<evidence type="ECO:0000250" key="1"/>
<evidence type="ECO:0000255" key="2">
    <source>
        <dbReference type="HAMAP-Rule" id="MF_00100"/>
    </source>
</evidence>
<evidence type="ECO:0000256" key="3">
    <source>
        <dbReference type="SAM" id="MobiDB-lite"/>
    </source>
</evidence>
<name>IF2_YERPA</name>
<accession>Q1CC07</accession>
<keyword id="KW-0963">Cytoplasm</keyword>
<keyword id="KW-0342">GTP-binding</keyword>
<keyword id="KW-0396">Initiation factor</keyword>
<keyword id="KW-0547">Nucleotide-binding</keyword>
<keyword id="KW-0648">Protein biosynthesis</keyword>